<name>VIT2_ORYSJ</name>
<protein>
    <recommendedName>
        <fullName evidence="5">Vacuolar iron transporter 2</fullName>
        <shortName evidence="4">OsVIT2</shortName>
    </recommendedName>
</protein>
<reference key="1">
    <citation type="journal article" date="2005" name="Nature">
        <title>The map-based sequence of the rice genome.</title>
        <authorList>
            <consortium name="International rice genome sequencing project (IRGSP)"/>
        </authorList>
    </citation>
    <scope>NUCLEOTIDE SEQUENCE [LARGE SCALE GENOMIC DNA]</scope>
    <source>
        <strain>cv. Nipponbare</strain>
    </source>
</reference>
<reference key="2">
    <citation type="journal article" date="2008" name="Nucleic Acids Res.">
        <title>The rice annotation project database (RAP-DB): 2008 update.</title>
        <authorList>
            <consortium name="The rice annotation project (RAP)"/>
        </authorList>
    </citation>
    <scope>GENOME REANNOTATION</scope>
    <source>
        <strain>cv. Nipponbare</strain>
    </source>
</reference>
<reference key="3">
    <citation type="journal article" date="2013" name="Rice">
        <title>Improvement of the Oryza sativa Nipponbare reference genome using next generation sequence and optical map data.</title>
        <authorList>
            <person name="Kawahara Y."/>
            <person name="de la Bastide M."/>
            <person name="Hamilton J.P."/>
            <person name="Kanamori H."/>
            <person name="McCombie W.R."/>
            <person name="Ouyang S."/>
            <person name="Schwartz D.C."/>
            <person name="Tanaka T."/>
            <person name="Wu J."/>
            <person name="Zhou S."/>
            <person name="Childs K.L."/>
            <person name="Davidson R.M."/>
            <person name="Lin H."/>
            <person name="Quesada-Ocampo L."/>
            <person name="Vaillancourt B."/>
            <person name="Sakai H."/>
            <person name="Lee S.S."/>
            <person name="Kim J."/>
            <person name="Numa H."/>
            <person name="Itoh T."/>
            <person name="Buell C.R."/>
            <person name="Matsumoto T."/>
        </authorList>
    </citation>
    <scope>GENOME REANNOTATION</scope>
    <source>
        <strain>cv. Nipponbare</strain>
    </source>
</reference>
<reference key="4">
    <citation type="journal article" date="2005" name="PLoS Biol.">
        <title>The genomes of Oryza sativa: a history of duplications.</title>
        <authorList>
            <person name="Yu J."/>
            <person name="Wang J."/>
            <person name="Lin W."/>
            <person name="Li S."/>
            <person name="Li H."/>
            <person name="Zhou J."/>
            <person name="Ni P."/>
            <person name="Dong W."/>
            <person name="Hu S."/>
            <person name="Zeng C."/>
            <person name="Zhang J."/>
            <person name="Zhang Y."/>
            <person name="Li R."/>
            <person name="Xu Z."/>
            <person name="Li S."/>
            <person name="Li X."/>
            <person name="Zheng H."/>
            <person name="Cong L."/>
            <person name="Lin L."/>
            <person name="Yin J."/>
            <person name="Geng J."/>
            <person name="Li G."/>
            <person name="Shi J."/>
            <person name="Liu J."/>
            <person name="Lv H."/>
            <person name="Li J."/>
            <person name="Wang J."/>
            <person name="Deng Y."/>
            <person name="Ran L."/>
            <person name="Shi X."/>
            <person name="Wang X."/>
            <person name="Wu Q."/>
            <person name="Li C."/>
            <person name="Ren X."/>
            <person name="Wang J."/>
            <person name="Wang X."/>
            <person name="Li D."/>
            <person name="Liu D."/>
            <person name="Zhang X."/>
            <person name="Ji Z."/>
            <person name="Zhao W."/>
            <person name="Sun Y."/>
            <person name="Zhang Z."/>
            <person name="Bao J."/>
            <person name="Han Y."/>
            <person name="Dong L."/>
            <person name="Ji J."/>
            <person name="Chen P."/>
            <person name="Wu S."/>
            <person name="Liu J."/>
            <person name="Xiao Y."/>
            <person name="Bu D."/>
            <person name="Tan J."/>
            <person name="Yang L."/>
            <person name="Ye C."/>
            <person name="Zhang J."/>
            <person name="Xu J."/>
            <person name="Zhou Y."/>
            <person name="Yu Y."/>
            <person name="Zhang B."/>
            <person name="Zhuang S."/>
            <person name="Wei H."/>
            <person name="Liu B."/>
            <person name="Lei M."/>
            <person name="Yu H."/>
            <person name="Li Y."/>
            <person name="Xu H."/>
            <person name="Wei S."/>
            <person name="He X."/>
            <person name="Fang L."/>
            <person name="Zhang Z."/>
            <person name="Zhang Y."/>
            <person name="Huang X."/>
            <person name="Su Z."/>
            <person name="Tong W."/>
            <person name="Li J."/>
            <person name="Tong Z."/>
            <person name="Li S."/>
            <person name="Ye J."/>
            <person name="Wang L."/>
            <person name="Fang L."/>
            <person name="Lei T."/>
            <person name="Chen C.-S."/>
            <person name="Chen H.-C."/>
            <person name="Xu Z."/>
            <person name="Li H."/>
            <person name="Huang H."/>
            <person name="Zhang F."/>
            <person name="Xu H."/>
            <person name="Li N."/>
            <person name="Zhao C."/>
            <person name="Li S."/>
            <person name="Dong L."/>
            <person name="Huang Y."/>
            <person name="Li L."/>
            <person name="Xi Y."/>
            <person name="Qi Q."/>
            <person name="Li W."/>
            <person name="Zhang B."/>
            <person name="Hu W."/>
            <person name="Zhang Y."/>
            <person name="Tian X."/>
            <person name="Jiao Y."/>
            <person name="Liang X."/>
            <person name="Jin J."/>
            <person name="Gao L."/>
            <person name="Zheng W."/>
            <person name="Hao B."/>
            <person name="Liu S.-M."/>
            <person name="Wang W."/>
            <person name="Yuan L."/>
            <person name="Cao M."/>
            <person name="McDermott J."/>
            <person name="Samudrala R."/>
            <person name="Wang J."/>
            <person name="Wong G.K.-S."/>
            <person name="Yang H."/>
        </authorList>
    </citation>
    <scope>NUCLEOTIDE SEQUENCE [LARGE SCALE GENOMIC DNA]</scope>
    <source>
        <strain>cv. Nipponbare</strain>
    </source>
</reference>
<reference key="5">
    <citation type="journal article" date="2012" name="Plant J.">
        <title>Vacuolar membrane transporters OsVIT1 and OsVIT2 modulate iron translocation between flag leaves and seeds in rice.</title>
        <authorList>
            <person name="Zhang Y."/>
            <person name="Xu Y.H."/>
            <person name="Yi H.Y."/>
            <person name="Gong J.M."/>
        </authorList>
    </citation>
    <scope>FUNCTION</scope>
    <scope>TRANSPORTER ACTIVITY</scope>
    <scope>SUBCELLULAR LOCATION</scope>
    <scope>TISSUE SPECIFICITY</scope>
    <scope>INDUCTION</scope>
    <scope>DISRUPTION PHENOTYPE</scope>
</reference>
<accession>Q6ERE5</accession>
<accession>A0A0P0XMS4</accession>
<accession>A3BYK3</accession>
<gene>
    <name evidence="4" type="primary">VIT2</name>
    <name evidence="8" type="ordered locus">Os09g0396900</name>
    <name evidence="5" type="ordered locus">LOC_Os09g23300</name>
    <name evidence="7" type="ORF">OJ1655_B12.5</name>
    <name evidence="9" type="ORF">OsJ_29262</name>
</gene>
<evidence type="ECO:0000250" key="1">
    <source>
        <dbReference type="UniProtKB" id="P0DO17"/>
    </source>
</evidence>
<evidence type="ECO:0000255" key="2"/>
<evidence type="ECO:0000269" key="3">
    <source>
    </source>
</evidence>
<evidence type="ECO:0000303" key="4">
    <source>
    </source>
</evidence>
<evidence type="ECO:0000305" key="5"/>
<evidence type="ECO:0000305" key="6">
    <source>
    </source>
</evidence>
<evidence type="ECO:0000312" key="7">
    <source>
        <dbReference type="EMBL" id="BAD28775.1"/>
    </source>
</evidence>
<evidence type="ECO:0000312" key="8">
    <source>
        <dbReference type="EMBL" id="BAT07937.1"/>
    </source>
</evidence>
<evidence type="ECO:0000312" key="9">
    <source>
        <dbReference type="EMBL" id="EAZ44642.1"/>
    </source>
</evidence>
<keyword id="KW-0406">Ion transport</keyword>
<keyword id="KW-0408">Iron</keyword>
<keyword id="KW-0410">Iron transport</keyword>
<keyword id="KW-0472">Membrane</keyword>
<keyword id="KW-0479">Metal-binding</keyword>
<keyword id="KW-1185">Reference proteome</keyword>
<keyword id="KW-0812">Transmembrane</keyword>
<keyword id="KW-1133">Transmembrane helix</keyword>
<keyword id="KW-0813">Transport</keyword>
<keyword id="KW-0926">Vacuole</keyword>
<proteinExistence type="evidence at transcript level"/>
<organism>
    <name type="scientific">Oryza sativa subsp. japonica</name>
    <name type="common">Rice</name>
    <dbReference type="NCBI Taxonomy" id="39947"/>
    <lineage>
        <taxon>Eukaryota</taxon>
        <taxon>Viridiplantae</taxon>
        <taxon>Streptophyta</taxon>
        <taxon>Embryophyta</taxon>
        <taxon>Tracheophyta</taxon>
        <taxon>Spermatophyta</taxon>
        <taxon>Magnoliopsida</taxon>
        <taxon>Liliopsida</taxon>
        <taxon>Poales</taxon>
        <taxon>Poaceae</taxon>
        <taxon>BOP clade</taxon>
        <taxon>Oryzoideae</taxon>
        <taxon>Oryzeae</taxon>
        <taxon>Oryzinae</taxon>
        <taxon>Oryza</taxon>
        <taxon>Oryza sativa</taxon>
    </lineage>
</organism>
<sequence>MVKEFVQDEEKQRLLLDEHTEKHFTAGEVVRDIIIGVSDGLTVPFALAAGLSGANAPSALVLTAGLAEVAAGAISMGLGGYLAAKSDADHYHRELQREQEEIDTVPDTEAAEIADILSQYGLGPEEYGPVVNSLRSNPKAWLEFMMKFELGLEKPEPRRALMSAGTIALAYVVGGLVPLLPYMFVPTADRAMATSVVVTLAALLFFGYVKGRFTGNRPFISAFQTAVIGALASAAAFGMAKAVQSI</sequence>
<dbReference type="EMBL" id="AP005577">
    <property type="protein sequence ID" value="BAD28775.1"/>
    <property type="status" value="ALT_SEQ"/>
    <property type="molecule type" value="Genomic_DNA"/>
</dbReference>
<dbReference type="EMBL" id="AP008215">
    <property type="protein sequence ID" value="BAF25015.1"/>
    <property type="status" value="ALT_SEQ"/>
    <property type="molecule type" value="Genomic_DNA"/>
</dbReference>
<dbReference type="EMBL" id="AP014965">
    <property type="protein sequence ID" value="BAT07937.1"/>
    <property type="status" value="ALT_SEQ"/>
    <property type="molecule type" value="Genomic_DNA"/>
</dbReference>
<dbReference type="EMBL" id="CM000146">
    <property type="protein sequence ID" value="EAZ44642.1"/>
    <property type="molecule type" value="Genomic_DNA"/>
</dbReference>
<dbReference type="RefSeq" id="XP_015610875.1">
    <property type="nucleotide sequence ID" value="XM_015755389.1"/>
</dbReference>
<dbReference type="SMR" id="Q6ERE5"/>
<dbReference type="FunCoup" id="Q6ERE5">
    <property type="interactions" value="7"/>
</dbReference>
<dbReference type="STRING" id="39947.Q6ERE5"/>
<dbReference type="PaxDb" id="39947-Q6ERE5"/>
<dbReference type="EnsemblPlants" id="Os09t0396900-02">
    <property type="protein sequence ID" value="Os09t0396900-02"/>
    <property type="gene ID" value="Os09g0396900"/>
</dbReference>
<dbReference type="Gramene" id="Os09t0396900-02">
    <property type="protein sequence ID" value="Os09t0396900-02"/>
    <property type="gene ID" value="Os09g0396900"/>
</dbReference>
<dbReference type="KEGG" id="dosa:Os09g0396900"/>
<dbReference type="eggNOG" id="KOG4473">
    <property type="taxonomic scope" value="Eukaryota"/>
</dbReference>
<dbReference type="InParanoid" id="Q6ERE5"/>
<dbReference type="OrthoDB" id="73465at2759"/>
<dbReference type="Proteomes" id="UP000000763">
    <property type="component" value="Chromosome 9"/>
</dbReference>
<dbReference type="Proteomes" id="UP000007752">
    <property type="component" value="Chromosome 9"/>
</dbReference>
<dbReference type="Proteomes" id="UP000059680">
    <property type="component" value="Chromosome 9"/>
</dbReference>
<dbReference type="ExpressionAtlas" id="Q6ERE5">
    <property type="expression patterns" value="baseline and differential"/>
</dbReference>
<dbReference type="GO" id="GO:0005774">
    <property type="term" value="C:vacuolar membrane"/>
    <property type="evidence" value="ECO:0000314"/>
    <property type="project" value="UniProtKB"/>
</dbReference>
<dbReference type="GO" id="GO:0005381">
    <property type="term" value="F:iron ion transmembrane transporter activity"/>
    <property type="evidence" value="ECO:0000315"/>
    <property type="project" value="CACAO"/>
</dbReference>
<dbReference type="GO" id="GO:0005384">
    <property type="term" value="F:manganese ion transmembrane transporter activity"/>
    <property type="evidence" value="ECO:0000318"/>
    <property type="project" value="GO_Central"/>
</dbReference>
<dbReference type="GO" id="GO:0046872">
    <property type="term" value="F:metal ion binding"/>
    <property type="evidence" value="ECO:0007669"/>
    <property type="project" value="UniProtKB-KW"/>
</dbReference>
<dbReference type="GO" id="GO:0006879">
    <property type="term" value="P:intracellular iron ion homeostasis"/>
    <property type="evidence" value="ECO:0000314"/>
    <property type="project" value="UniProtKB"/>
</dbReference>
<dbReference type="GO" id="GO:0030026">
    <property type="term" value="P:intracellular manganese ion homeostasis"/>
    <property type="evidence" value="ECO:0000318"/>
    <property type="project" value="GO_Central"/>
</dbReference>
<dbReference type="CDD" id="cd02435">
    <property type="entry name" value="CCC1"/>
    <property type="match status" value="1"/>
</dbReference>
<dbReference type="InterPro" id="IPR008217">
    <property type="entry name" value="Ccc1_fam"/>
</dbReference>
<dbReference type="PANTHER" id="PTHR31851">
    <property type="entry name" value="FE(2+)/MN(2+) TRANSPORTER PCL1"/>
    <property type="match status" value="1"/>
</dbReference>
<dbReference type="Pfam" id="PF01988">
    <property type="entry name" value="VIT1"/>
    <property type="match status" value="1"/>
</dbReference>
<comment type="function">
    <text evidence="3 6">Vacuolar iron transporter involved in the transfer of iron ions from the cytosol to the vacuole for intracellular iron storage (PubMed:22731699). Vacuolar iron storage is required for seed embryo and seedling development (Probable). May be involved in the regulation of iron translocation between flag leaves and seeds (Probable). Can transport zinc ions from the cytosol to the vacuole (PubMed:22731699).</text>
</comment>
<comment type="catalytic activity">
    <reaction evidence="3">
        <text>Fe(2+)(in) = Fe(2+)(out)</text>
        <dbReference type="Rhea" id="RHEA:28486"/>
        <dbReference type="ChEBI" id="CHEBI:29033"/>
    </reaction>
    <physiologicalReaction direction="left-to-right" evidence="5">
        <dbReference type="Rhea" id="RHEA:28487"/>
    </physiologicalReaction>
</comment>
<comment type="subunit">
    <text evidence="1">Homodimer. The dimeric interaction is mediated by both the transmembrane domains (TMDs) and the cytoplasmic metal binding domain (MBD).</text>
</comment>
<comment type="subcellular location">
    <subcellularLocation>
        <location evidence="3">Vacuole membrane</location>
        <topology evidence="2">Multi-pass membrane protein</topology>
    </subcellularLocation>
    <text evidence="3">Localizes to the tonoplast.</text>
</comment>
<comment type="tissue specificity">
    <text evidence="3">Expressed in leaf sheaths and at lower level in leaf blades.</text>
</comment>
<comment type="induction">
    <text evidence="3">Induced by treatment with iron in roots and shoots (PubMed:22731699). Down-regulated under iron deficiency in roots and shoots (PubMed:22731699). Down-regulated by treatment with zinc in roots and shoots (PubMed:22731699).</text>
</comment>
<comment type="domain">
    <text evidence="1">The cytoplasmic metal binding domain (MBD) is located between transmembrane 2 (TM2) and transmembrane 3 (TM3).</text>
</comment>
<comment type="disruption phenotype">
    <text evidence="3">No visible phenotype under normal growth conditions, but mutant embryos exhibit higher levels of iron and zinc, and leaf blades of mutant plants show decreased levels of iron and zinc.</text>
</comment>
<comment type="miscellaneous">
    <text evidence="3">Can mediate sequestration of iron ions into vacuoles when expressed in the yeast ccc1 mutant (PubMed:22731699). Can mediate zinc ions sequestration into vacuoles when expressed in the yeast zrc1 mutant (PubMed:22731699).</text>
</comment>
<comment type="similarity">
    <text evidence="5">Belongs to the CCC1 family.</text>
</comment>
<comment type="sequence caution" evidence="5">
    <conflict type="erroneous gene model prediction">
        <sequence resource="EMBL-CDS" id="BAD28775"/>
    </conflict>
</comment>
<comment type="sequence caution" evidence="5">
    <conflict type="erroneous gene model prediction">
        <sequence resource="EMBL-CDS" id="BAF25015"/>
    </conflict>
</comment>
<comment type="sequence caution" evidence="5">
    <conflict type="erroneous gene model prediction">
        <sequence resource="EMBL-CDS" id="BAT07937"/>
    </conflict>
</comment>
<feature type="chain" id="PRO_0000411006" description="Vacuolar iron transporter 2">
    <location>
        <begin position="1"/>
        <end position="246"/>
    </location>
</feature>
<feature type="topological domain" description="Cytoplasmic" evidence="2">
    <location>
        <begin position="1"/>
        <end position="32"/>
    </location>
</feature>
<feature type="transmembrane region" description="Helical" evidence="2">
    <location>
        <begin position="33"/>
        <end position="53"/>
    </location>
</feature>
<feature type="topological domain" description="Vacuolar" evidence="2">
    <location>
        <begin position="54"/>
        <end position="58"/>
    </location>
</feature>
<feature type="transmembrane region" description="Helical" evidence="2">
    <location>
        <begin position="59"/>
        <end position="79"/>
    </location>
</feature>
<feature type="topological domain" description="Cytoplasmic" evidence="2">
    <location>
        <begin position="80"/>
        <end position="164"/>
    </location>
</feature>
<feature type="transmembrane region" description="Helical" evidence="2">
    <location>
        <begin position="165"/>
        <end position="185"/>
    </location>
</feature>
<feature type="topological domain" description="Vacuolar" evidence="2">
    <location>
        <begin position="186"/>
        <end position="190"/>
    </location>
</feature>
<feature type="transmembrane region" description="Helical" evidence="2">
    <location>
        <begin position="191"/>
        <end position="211"/>
    </location>
</feature>
<feature type="topological domain" description="Cytoplasmic" evidence="2">
    <location>
        <begin position="212"/>
        <end position="218"/>
    </location>
</feature>
<feature type="transmembrane region" description="Helical" evidence="2">
    <location>
        <begin position="219"/>
        <end position="239"/>
    </location>
</feature>
<feature type="topological domain" description="Vacuolar" evidence="2">
    <location>
        <begin position="240"/>
        <end position="246"/>
    </location>
</feature>
<feature type="region of interest" description="Cytoplasmic metal binding domain (MBD)" evidence="1">
    <location>
        <begin position="86"/>
        <end position="161"/>
    </location>
</feature>
<feature type="binding site" evidence="1">
    <location>
        <position position="98"/>
    </location>
    <ligand>
        <name>Fe cation</name>
        <dbReference type="ChEBI" id="CHEBI:24875"/>
        <label>1</label>
    </ligand>
</feature>
<feature type="binding site" evidence="1">
    <location>
        <position position="98"/>
    </location>
    <ligand>
        <name>Fe cation</name>
        <dbReference type="ChEBI" id="CHEBI:24875"/>
        <label>2</label>
    </ligand>
</feature>
<feature type="binding site" evidence="1">
    <location>
        <position position="101"/>
    </location>
    <ligand>
        <name>Fe cation</name>
        <dbReference type="ChEBI" id="CHEBI:24875"/>
        <label>1</label>
    </ligand>
</feature>
<feature type="binding site" evidence="1">
    <location>
        <position position="101"/>
    </location>
    <ligand>
        <name>Fe cation</name>
        <dbReference type="ChEBI" id="CHEBI:24875"/>
        <label>3</label>
    </ligand>
</feature>
<feature type="binding site" evidence="1">
    <location>
        <position position="109"/>
    </location>
    <ligand>
        <name>Fe cation</name>
        <dbReference type="ChEBI" id="CHEBI:24875"/>
        <label>1</label>
    </ligand>
</feature>
<feature type="binding site" evidence="1">
    <location>
        <position position="109"/>
    </location>
    <ligand>
        <name>Fe cation</name>
        <dbReference type="ChEBI" id="CHEBI:24875"/>
        <label>2</label>
    </ligand>
</feature>
<feature type="binding site" evidence="1">
    <location>
        <position position="109"/>
    </location>
    <ligand>
        <name>Fe cation</name>
        <dbReference type="ChEBI" id="CHEBI:24875"/>
        <label>3</label>
    </ligand>
</feature>
<feature type="binding site" evidence="1">
    <location>
        <position position="112"/>
    </location>
    <ligand>
        <name>Fe cation</name>
        <dbReference type="ChEBI" id="CHEBI:24875"/>
        <label>1</label>
    </ligand>
</feature>
<feature type="binding site" evidence="1">
    <location>
        <position position="112"/>
    </location>
    <ligand>
        <name>Fe cation</name>
        <dbReference type="ChEBI" id="CHEBI:24875"/>
        <label>2</label>
    </ligand>
</feature>
<feature type="binding site" evidence="1">
    <location>
        <position position="112"/>
    </location>
    <ligand>
        <name>Fe cation</name>
        <dbReference type="ChEBI" id="CHEBI:24875"/>
        <label>3</label>
    </ligand>
</feature>
<feature type="binding site" evidence="1">
    <location>
        <position position="145"/>
    </location>
    <ligand>
        <name>Fe cation</name>
        <dbReference type="ChEBI" id="CHEBI:24875"/>
        <label>2</label>
    </ligand>
</feature>
<feature type="binding site" evidence="1">
    <location>
        <position position="149"/>
    </location>
    <ligand>
        <name>Fe cation</name>
        <dbReference type="ChEBI" id="CHEBI:24875"/>
        <label>1</label>
    </ligand>
</feature>